<organism>
    <name type="scientific">Bacillus subtilis (strain 168)</name>
    <dbReference type="NCBI Taxonomy" id="224308"/>
    <lineage>
        <taxon>Bacteria</taxon>
        <taxon>Bacillati</taxon>
        <taxon>Bacillota</taxon>
        <taxon>Bacilli</taxon>
        <taxon>Bacillales</taxon>
        <taxon>Bacillaceae</taxon>
        <taxon>Bacillus</taxon>
    </lineage>
</organism>
<feature type="chain" id="PRO_0000117234" description="Methylenetetrahydrofolate--tRNA-(uracil-5-)-methyltransferase TrmFO">
    <location>
        <begin position="1"/>
        <end position="435"/>
    </location>
</feature>
<feature type="binding site" evidence="1">
    <location>
        <begin position="10"/>
        <end position="15"/>
    </location>
    <ligand>
        <name>FAD</name>
        <dbReference type="ChEBI" id="CHEBI:57692"/>
    </ligand>
</feature>
<proteinExistence type="evidence at protein level"/>
<name>TRMFO_BACSU</name>
<evidence type="ECO:0000255" key="1">
    <source>
        <dbReference type="HAMAP-Rule" id="MF_01037"/>
    </source>
</evidence>
<evidence type="ECO:0000269" key="2">
    <source>
    </source>
</evidence>
<evidence type="ECO:0000269" key="3">
    <source>
    </source>
</evidence>
<evidence type="ECO:0000305" key="4"/>
<evidence type="ECO:0000305" key="5">
    <source>
    </source>
</evidence>
<keyword id="KW-0963">Cytoplasm</keyword>
<keyword id="KW-0274">FAD</keyword>
<keyword id="KW-0285">Flavoprotein</keyword>
<keyword id="KW-0489">Methyltransferase</keyword>
<keyword id="KW-0520">NAD</keyword>
<keyword id="KW-0521">NADP</keyword>
<keyword id="KW-1185">Reference proteome</keyword>
<keyword id="KW-0808">Transferase</keyword>
<keyword id="KW-0819">tRNA processing</keyword>
<protein>
    <recommendedName>
        <fullName evidence="1">Methylenetetrahydrofolate--tRNA-(uracil-5-)-methyltransferase TrmFO</fullName>
        <ecNumber evidence="1 2 3">2.1.1.74</ecNumber>
    </recommendedName>
    <alternativeName>
        <fullName evidence="1">Folate-dependent tRNA (uracil-5-)-methyltransferase</fullName>
    </alternativeName>
    <alternativeName>
        <fullName evidence="1">Folate-dependent tRNA(M-5-U54)-methyltransferase</fullName>
    </alternativeName>
</protein>
<reference key="1">
    <citation type="submission" date="1997-07" db="EMBL/GenBank/DDBJ databases">
        <title>Cloning and sequencing 7.5 Kbp of DNA from Bacillus subtilis upstream of the codV gene.</title>
        <authorList>
            <person name="Foulger D."/>
            <person name="Errington J."/>
        </authorList>
    </citation>
    <scope>NUCLEOTIDE SEQUENCE [GENOMIC DNA]</scope>
    <source>
        <strain>168</strain>
    </source>
</reference>
<reference key="2">
    <citation type="journal article" date="1997" name="Nature">
        <title>The complete genome sequence of the Gram-positive bacterium Bacillus subtilis.</title>
        <authorList>
            <person name="Kunst F."/>
            <person name="Ogasawara N."/>
            <person name="Moszer I."/>
            <person name="Albertini A.M."/>
            <person name="Alloni G."/>
            <person name="Azevedo V."/>
            <person name="Bertero M.G."/>
            <person name="Bessieres P."/>
            <person name="Bolotin A."/>
            <person name="Borchert S."/>
            <person name="Borriss R."/>
            <person name="Boursier L."/>
            <person name="Brans A."/>
            <person name="Braun M."/>
            <person name="Brignell S.C."/>
            <person name="Bron S."/>
            <person name="Brouillet S."/>
            <person name="Bruschi C.V."/>
            <person name="Caldwell B."/>
            <person name="Capuano V."/>
            <person name="Carter N.M."/>
            <person name="Choi S.-K."/>
            <person name="Codani J.-J."/>
            <person name="Connerton I.F."/>
            <person name="Cummings N.J."/>
            <person name="Daniel R.A."/>
            <person name="Denizot F."/>
            <person name="Devine K.M."/>
            <person name="Duesterhoeft A."/>
            <person name="Ehrlich S.D."/>
            <person name="Emmerson P.T."/>
            <person name="Entian K.-D."/>
            <person name="Errington J."/>
            <person name="Fabret C."/>
            <person name="Ferrari E."/>
            <person name="Foulger D."/>
            <person name="Fritz C."/>
            <person name="Fujita M."/>
            <person name="Fujita Y."/>
            <person name="Fuma S."/>
            <person name="Galizzi A."/>
            <person name="Galleron N."/>
            <person name="Ghim S.-Y."/>
            <person name="Glaser P."/>
            <person name="Goffeau A."/>
            <person name="Golightly E.J."/>
            <person name="Grandi G."/>
            <person name="Guiseppi G."/>
            <person name="Guy B.J."/>
            <person name="Haga K."/>
            <person name="Haiech J."/>
            <person name="Harwood C.R."/>
            <person name="Henaut A."/>
            <person name="Hilbert H."/>
            <person name="Holsappel S."/>
            <person name="Hosono S."/>
            <person name="Hullo M.-F."/>
            <person name="Itaya M."/>
            <person name="Jones L.-M."/>
            <person name="Joris B."/>
            <person name="Karamata D."/>
            <person name="Kasahara Y."/>
            <person name="Klaerr-Blanchard M."/>
            <person name="Klein C."/>
            <person name="Kobayashi Y."/>
            <person name="Koetter P."/>
            <person name="Koningstein G."/>
            <person name="Krogh S."/>
            <person name="Kumano M."/>
            <person name="Kurita K."/>
            <person name="Lapidus A."/>
            <person name="Lardinois S."/>
            <person name="Lauber J."/>
            <person name="Lazarevic V."/>
            <person name="Lee S.-M."/>
            <person name="Levine A."/>
            <person name="Liu H."/>
            <person name="Masuda S."/>
            <person name="Mauel C."/>
            <person name="Medigue C."/>
            <person name="Medina N."/>
            <person name="Mellado R.P."/>
            <person name="Mizuno M."/>
            <person name="Moestl D."/>
            <person name="Nakai S."/>
            <person name="Noback M."/>
            <person name="Noone D."/>
            <person name="O'Reilly M."/>
            <person name="Ogawa K."/>
            <person name="Ogiwara A."/>
            <person name="Oudega B."/>
            <person name="Park S.-H."/>
            <person name="Parro V."/>
            <person name="Pohl T.M."/>
            <person name="Portetelle D."/>
            <person name="Porwollik S."/>
            <person name="Prescott A.M."/>
            <person name="Presecan E."/>
            <person name="Pujic P."/>
            <person name="Purnelle B."/>
            <person name="Rapoport G."/>
            <person name="Rey M."/>
            <person name="Reynolds S."/>
            <person name="Rieger M."/>
            <person name="Rivolta C."/>
            <person name="Rocha E."/>
            <person name="Roche B."/>
            <person name="Rose M."/>
            <person name="Sadaie Y."/>
            <person name="Sato T."/>
            <person name="Scanlan E."/>
            <person name="Schleich S."/>
            <person name="Schroeter R."/>
            <person name="Scoffone F."/>
            <person name="Sekiguchi J."/>
            <person name="Sekowska A."/>
            <person name="Seror S.J."/>
            <person name="Serror P."/>
            <person name="Shin B.-S."/>
            <person name="Soldo B."/>
            <person name="Sorokin A."/>
            <person name="Tacconi E."/>
            <person name="Takagi T."/>
            <person name="Takahashi H."/>
            <person name="Takemaru K."/>
            <person name="Takeuchi M."/>
            <person name="Tamakoshi A."/>
            <person name="Tanaka T."/>
            <person name="Terpstra P."/>
            <person name="Tognoni A."/>
            <person name="Tosato V."/>
            <person name="Uchiyama S."/>
            <person name="Vandenbol M."/>
            <person name="Vannier F."/>
            <person name="Vassarotti A."/>
            <person name="Viari A."/>
            <person name="Wambutt R."/>
            <person name="Wedler E."/>
            <person name="Wedler H."/>
            <person name="Weitzenegger T."/>
            <person name="Winters P."/>
            <person name="Wipat A."/>
            <person name="Yamamoto H."/>
            <person name="Yamane K."/>
            <person name="Yasumoto K."/>
            <person name="Yata K."/>
            <person name="Yoshida K."/>
            <person name="Yoshikawa H.-F."/>
            <person name="Zumstein E."/>
            <person name="Yoshikawa H."/>
            <person name="Danchin A."/>
        </authorList>
    </citation>
    <scope>NUCLEOTIDE SEQUENCE [LARGE SCALE GENOMIC DNA]</scope>
    <source>
        <strain>168</strain>
    </source>
</reference>
<reference key="3">
    <citation type="submission" date="1994-08" db="EMBL/GenBank/DDBJ databases">
        <title>Cloning and sequencing of the TopI gene, the gene encoding B. subtilis DNA topoisomerase I.</title>
        <authorList>
            <person name="de Jong S."/>
        </authorList>
    </citation>
    <scope>NUCLEOTIDE SEQUENCE [GENOMIC DNA] OF 1-363</scope>
    <source>
        <strain>168 / 8G5</strain>
    </source>
</reference>
<reference key="4">
    <citation type="journal article" date="1995" name="Mol. Microbiol.">
        <title>A gene required for nutritional repression of the Bacillus subtilis dipeptide permease operon.</title>
        <authorList>
            <person name="Slack F.J."/>
            <person name="Serror P."/>
            <person name="Joyce E."/>
            <person name="Sonenshein A.L."/>
        </authorList>
    </citation>
    <scope>NUCLEOTIDE SEQUENCE [GENOMIC DNA] OF 362-435</scope>
    <source>
        <strain>168 / JH642</strain>
    </source>
</reference>
<reference key="5">
    <citation type="journal article" date="2005" name="Nucleic Acids Res.">
        <title>Identification of a novel gene encoding a flavin-dependent tRNA:m5U methyltransferase in bacteria - evolutionary implications.</title>
        <authorList>
            <person name="Urbonavicius J."/>
            <person name="Skouloubris S."/>
            <person name="Myllykallio H."/>
            <person name="Grosjean H."/>
        </authorList>
    </citation>
    <scope>FUNCTION AS A TRNA(M-5-U54)-METHYLTRANSFERASE</scope>
    <scope>CATALYTIC ACTIVITY</scope>
    <scope>COFACTOR</scope>
    <scope>SUBUNIT</scope>
</reference>
<reference key="6">
    <citation type="journal article" date="2007" name="Methods Enzymol.">
        <title>In vitro detection of the enzymatic activity of folate-dependent tRNA (Uracil-54,-C5)-methyltransferase: evolutionary implications.</title>
        <authorList>
            <person name="Urbonavicius J."/>
            <person name="Brochier-Armanet C."/>
            <person name="Skouloubris S."/>
            <person name="Myllykallio H."/>
            <person name="Grosjean H."/>
        </authorList>
    </citation>
    <scope>FUNCTION AS A TRNA(M-5-U54)-METHYLTRANSFERASE</scope>
    <scope>CATALYTIC ACTIVITY</scope>
</reference>
<accession>P39815</accession>
<accession>Q6LCY5</accession>
<sequence length="435" mass="48063">MNQQTVNVIGAGLAGSEAAWQLAKRGIQVKLYEMRPVKQTPAHHTDKFAELVCSNSLRSNTLANAVGVLKEEMRALDSAIIAAADECSVPAGGALAVDRHEFAASVTNRVKNHPNVTVINEEVTEIPEGPTIIATGPLTSESLSAQLKELTGEDYLYFYDAAAPIVEKDSLDMDKVYLKSRYDKGEAAYLNCPMTEEEFDRFHEALTSAETVPLKEFEKEIFFEGCMPIEVMAKRGKKTMLFGPMKPVGLEHPVTGKRPYAVVQLRQDDAAGTLYNIVGFQTHLKWGDQKEVLKLIPGLENVEIVRYGVMHRNTFINSPSLLKPTYQFKNRSDLFFAGQMTGVEGYVESAASGLVAGINAAKLVLGEELVIFPQETAIGSMAHYITTTNQKNFQPMNANFGLLKELPVKIKNKKERNEQYANRAIETIQTISKTI</sequence>
<gene>
    <name evidence="1" type="primary">trmFO</name>
    <name type="synonym">gid</name>
    <name type="synonym">ylyC</name>
    <name type="ordered locus">BSU16130</name>
</gene>
<comment type="function">
    <text evidence="1 2 3">Catalyzes the folate-dependent formation of 5-methyl-uridine at position 54 (M-5-U54) in all tRNAs.</text>
</comment>
<comment type="catalytic activity">
    <reaction evidence="1 2 3">
        <text>uridine(54) in tRNA + (6R)-5,10-methylene-5,6,7,8-tetrahydrofolate + NADH + H(+) = 5-methyluridine(54) in tRNA + (6S)-5,6,7,8-tetrahydrofolate + NAD(+)</text>
        <dbReference type="Rhea" id="RHEA:16873"/>
        <dbReference type="Rhea" id="RHEA-COMP:10167"/>
        <dbReference type="Rhea" id="RHEA-COMP:10193"/>
        <dbReference type="ChEBI" id="CHEBI:15378"/>
        <dbReference type="ChEBI" id="CHEBI:15636"/>
        <dbReference type="ChEBI" id="CHEBI:57453"/>
        <dbReference type="ChEBI" id="CHEBI:57540"/>
        <dbReference type="ChEBI" id="CHEBI:57945"/>
        <dbReference type="ChEBI" id="CHEBI:65315"/>
        <dbReference type="ChEBI" id="CHEBI:74447"/>
        <dbReference type="EC" id="2.1.1.74"/>
    </reaction>
</comment>
<comment type="catalytic activity">
    <reaction evidence="1 2 3">
        <text>uridine(54) in tRNA + (6R)-5,10-methylene-5,6,7,8-tetrahydrofolate + NADPH + H(+) = 5-methyluridine(54) in tRNA + (6S)-5,6,7,8-tetrahydrofolate + NADP(+)</text>
        <dbReference type="Rhea" id="RHEA:62372"/>
        <dbReference type="Rhea" id="RHEA-COMP:10167"/>
        <dbReference type="Rhea" id="RHEA-COMP:10193"/>
        <dbReference type="ChEBI" id="CHEBI:15378"/>
        <dbReference type="ChEBI" id="CHEBI:15636"/>
        <dbReference type="ChEBI" id="CHEBI:57453"/>
        <dbReference type="ChEBI" id="CHEBI:57783"/>
        <dbReference type="ChEBI" id="CHEBI:58349"/>
        <dbReference type="ChEBI" id="CHEBI:65315"/>
        <dbReference type="ChEBI" id="CHEBI:74447"/>
        <dbReference type="EC" id="2.1.1.74"/>
    </reaction>
</comment>
<comment type="cofactor">
    <cofactor evidence="1 5">
        <name>FAD</name>
        <dbReference type="ChEBI" id="CHEBI:57692"/>
    </cofactor>
</comment>
<comment type="subunit">
    <text evidence="5">Homodimer.</text>
</comment>
<comment type="subcellular location">
    <subcellularLocation>
        <location evidence="1">Cytoplasm</location>
    </subcellularLocation>
</comment>
<comment type="similarity">
    <text evidence="1 4">Belongs to the MnmG family. TrmFO subfamily.</text>
</comment>
<dbReference type="EC" id="2.1.1.74" evidence="1 2 3"/>
<dbReference type="EMBL" id="AJ000975">
    <property type="protein sequence ID" value="CAA04423.1"/>
    <property type="molecule type" value="Genomic_DNA"/>
</dbReference>
<dbReference type="EMBL" id="AL009126">
    <property type="protein sequence ID" value="CAB13486.1"/>
    <property type="molecule type" value="Genomic_DNA"/>
</dbReference>
<dbReference type="EMBL" id="L27797">
    <property type="protein sequence ID" value="AAA22764.1"/>
    <property type="molecule type" value="Genomic_DNA"/>
</dbReference>
<dbReference type="EMBL" id="U13634">
    <property type="protein sequence ID" value="AAB03368.1"/>
    <property type="molecule type" value="Genomic_DNA"/>
</dbReference>
<dbReference type="PIR" id="A69632">
    <property type="entry name" value="A69632"/>
</dbReference>
<dbReference type="RefSeq" id="NP_389495.1">
    <property type="nucleotide sequence ID" value="NC_000964.3"/>
</dbReference>
<dbReference type="RefSeq" id="WP_003244725.1">
    <property type="nucleotide sequence ID" value="NZ_OZ025638.1"/>
</dbReference>
<dbReference type="SMR" id="P39815"/>
<dbReference type="FunCoup" id="P39815">
    <property type="interactions" value="17"/>
</dbReference>
<dbReference type="STRING" id="224308.BSU16130"/>
<dbReference type="jPOST" id="P39815"/>
<dbReference type="PaxDb" id="224308-BSU16130"/>
<dbReference type="DNASU" id="938816"/>
<dbReference type="EnsemblBacteria" id="CAB13486">
    <property type="protein sequence ID" value="CAB13486"/>
    <property type="gene ID" value="BSU_16130"/>
</dbReference>
<dbReference type="GeneID" id="938816"/>
<dbReference type="KEGG" id="bsu:BSU16130"/>
<dbReference type="PATRIC" id="fig|224308.179.peg.1753"/>
<dbReference type="eggNOG" id="COG1206">
    <property type="taxonomic scope" value="Bacteria"/>
</dbReference>
<dbReference type="InParanoid" id="P39815"/>
<dbReference type="OrthoDB" id="9803114at2"/>
<dbReference type="PhylomeDB" id="P39815"/>
<dbReference type="BioCyc" id="BSUB:BSU16130-MONOMER"/>
<dbReference type="BRENDA" id="2.1.1.74">
    <property type="organism ID" value="658"/>
</dbReference>
<dbReference type="Proteomes" id="UP000001570">
    <property type="component" value="Chromosome"/>
</dbReference>
<dbReference type="GO" id="GO:0005829">
    <property type="term" value="C:cytosol"/>
    <property type="evidence" value="ECO:0000318"/>
    <property type="project" value="GO_Central"/>
</dbReference>
<dbReference type="GO" id="GO:0050660">
    <property type="term" value="F:flavin adenine dinucleotide binding"/>
    <property type="evidence" value="ECO:0000318"/>
    <property type="project" value="GO_Central"/>
</dbReference>
<dbReference type="GO" id="GO:0047151">
    <property type="term" value="F:tRNA (uracil(54)-C5)-methyltransferase activity, 5,10-methylenetetrahydrofolate-dependent"/>
    <property type="evidence" value="ECO:0007669"/>
    <property type="project" value="UniProtKB-UniRule"/>
</dbReference>
<dbReference type="GO" id="GO:0030488">
    <property type="term" value="P:tRNA methylation"/>
    <property type="evidence" value="ECO:0000318"/>
    <property type="project" value="GO_Central"/>
</dbReference>
<dbReference type="GO" id="GO:0002098">
    <property type="term" value="P:tRNA wobble uridine modification"/>
    <property type="evidence" value="ECO:0000318"/>
    <property type="project" value="GO_Central"/>
</dbReference>
<dbReference type="FunFam" id="3.50.50.60:FF:000035">
    <property type="entry name" value="Methylenetetrahydrofolate--tRNA-(uracil-5-)-methyltransferase TrmFO"/>
    <property type="match status" value="1"/>
</dbReference>
<dbReference type="FunFam" id="3.50.50.60:FF:000040">
    <property type="entry name" value="Methylenetetrahydrofolate--tRNA-(uracil-5-)-methyltransferase TrmFO"/>
    <property type="match status" value="1"/>
</dbReference>
<dbReference type="Gene3D" id="3.50.50.60">
    <property type="entry name" value="FAD/NAD(P)-binding domain"/>
    <property type="match status" value="2"/>
</dbReference>
<dbReference type="HAMAP" id="MF_01037">
    <property type="entry name" value="TrmFO"/>
    <property type="match status" value="1"/>
</dbReference>
<dbReference type="InterPro" id="IPR036188">
    <property type="entry name" value="FAD/NAD-bd_sf"/>
</dbReference>
<dbReference type="InterPro" id="IPR002218">
    <property type="entry name" value="MnmG-rel"/>
</dbReference>
<dbReference type="InterPro" id="IPR020595">
    <property type="entry name" value="MnmG-rel_CS"/>
</dbReference>
<dbReference type="InterPro" id="IPR040131">
    <property type="entry name" value="MnmG_N"/>
</dbReference>
<dbReference type="InterPro" id="IPR004417">
    <property type="entry name" value="TrmFO"/>
</dbReference>
<dbReference type="NCBIfam" id="TIGR00137">
    <property type="entry name" value="gid_trmFO"/>
    <property type="match status" value="1"/>
</dbReference>
<dbReference type="NCBIfam" id="NF003739">
    <property type="entry name" value="PRK05335.1"/>
    <property type="match status" value="1"/>
</dbReference>
<dbReference type="PANTHER" id="PTHR11806">
    <property type="entry name" value="GLUCOSE INHIBITED DIVISION PROTEIN A"/>
    <property type="match status" value="1"/>
</dbReference>
<dbReference type="PANTHER" id="PTHR11806:SF2">
    <property type="entry name" value="METHYLENETETRAHYDROFOLATE--TRNA-(URACIL-5-)-METHYLTRANSFERASE TRMFO"/>
    <property type="match status" value="1"/>
</dbReference>
<dbReference type="Pfam" id="PF01134">
    <property type="entry name" value="GIDA"/>
    <property type="match status" value="1"/>
</dbReference>
<dbReference type="SUPFAM" id="SSF51905">
    <property type="entry name" value="FAD/NAD(P)-binding domain"/>
    <property type="match status" value="1"/>
</dbReference>
<dbReference type="PROSITE" id="PS01281">
    <property type="entry name" value="GIDA_2"/>
    <property type="match status" value="1"/>
</dbReference>